<reference key="1">
    <citation type="journal article" date="1988" name="Plant Mol. Biol.">
        <title>Molecular cloning, genome organization, expression and evolution of 12S seed storage protein genes of Arabidopsis thaliana.</title>
        <authorList>
            <person name="Pang P.P."/>
            <person name="Pruitt R.E."/>
            <person name="Meyerowitz E.M."/>
        </authorList>
        <dbReference type="AGRICOLA" id="IND91035197"/>
    </citation>
    <scope>NUCLEOTIDE SEQUENCE [GENOMIC DNA]</scope>
    <scope>DEVELOPMENTAL STAGE</scope>
    <source>
        <strain>cv. Columbia</strain>
        <strain>cv. Landsberg erecta</strain>
    </source>
</reference>
<reference key="2">
    <citation type="journal article" date="2000" name="Nature">
        <title>Sequence and analysis of chromosome 1 of the plant Arabidopsis thaliana.</title>
        <authorList>
            <person name="Theologis A."/>
            <person name="Ecker J.R."/>
            <person name="Palm C.J."/>
            <person name="Federspiel N.A."/>
            <person name="Kaul S."/>
            <person name="White O."/>
            <person name="Alonso J."/>
            <person name="Altafi H."/>
            <person name="Araujo R."/>
            <person name="Bowman C.L."/>
            <person name="Brooks S.Y."/>
            <person name="Buehler E."/>
            <person name="Chan A."/>
            <person name="Chao Q."/>
            <person name="Chen H."/>
            <person name="Cheuk R.F."/>
            <person name="Chin C.W."/>
            <person name="Chung M.K."/>
            <person name="Conn L."/>
            <person name="Conway A.B."/>
            <person name="Conway A.R."/>
            <person name="Creasy T.H."/>
            <person name="Dewar K."/>
            <person name="Dunn P."/>
            <person name="Etgu P."/>
            <person name="Feldblyum T.V."/>
            <person name="Feng J.-D."/>
            <person name="Fong B."/>
            <person name="Fujii C.Y."/>
            <person name="Gill J.E."/>
            <person name="Goldsmith A.D."/>
            <person name="Haas B."/>
            <person name="Hansen N.F."/>
            <person name="Hughes B."/>
            <person name="Huizar L."/>
            <person name="Hunter J.L."/>
            <person name="Jenkins J."/>
            <person name="Johnson-Hopson C."/>
            <person name="Khan S."/>
            <person name="Khaykin E."/>
            <person name="Kim C.J."/>
            <person name="Koo H.L."/>
            <person name="Kremenetskaia I."/>
            <person name="Kurtz D.B."/>
            <person name="Kwan A."/>
            <person name="Lam B."/>
            <person name="Langin-Hooper S."/>
            <person name="Lee A."/>
            <person name="Lee J.M."/>
            <person name="Lenz C.A."/>
            <person name="Li J.H."/>
            <person name="Li Y.-P."/>
            <person name="Lin X."/>
            <person name="Liu S.X."/>
            <person name="Liu Z.A."/>
            <person name="Luros J.S."/>
            <person name="Maiti R."/>
            <person name="Marziali A."/>
            <person name="Militscher J."/>
            <person name="Miranda M."/>
            <person name="Nguyen M."/>
            <person name="Nierman W.C."/>
            <person name="Osborne B.I."/>
            <person name="Pai G."/>
            <person name="Peterson J."/>
            <person name="Pham P.K."/>
            <person name="Rizzo M."/>
            <person name="Rooney T."/>
            <person name="Rowley D."/>
            <person name="Sakano H."/>
            <person name="Salzberg S.L."/>
            <person name="Schwartz J.R."/>
            <person name="Shinn P."/>
            <person name="Southwick A.M."/>
            <person name="Sun H."/>
            <person name="Tallon L.J."/>
            <person name="Tambunga G."/>
            <person name="Toriumi M.J."/>
            <person name="Town C.D."/>
            <person name="Utterback T."/>
            <person name="Van Aken S."/>
            <person name="Vaysberg M."/>
            <person name="Vysotskaia V.S."/>
            <person name="Walker M."/>
            <person name="Wu D."/>
            <person name="Yu G."/>
            <person name="Fraser C.M."/>
            <person name="Venter J.C."/>
            <person name="Davis R.W."/>
        </authorList>
    </citation>
    <scope>NUCLEOTIDE SEQUENCE [LARGE SCALE GENOMIC DNA]</scope>
    <source>
        <strain>cv. Columbia</strain>
    </source>
</reference>
<reference key="3">
    <citation type="journal article" date="2017" name="Plant J.">
        <title>Araport11: a complete reannotation of the Arabidopsis thaliana reference genome.</title>
        <authorList>
            <person name="Cheng C.Y."/>
            <person name="Krishnakumar V."/>
            <person name="Chan A.P."/>
            <person name="Thibaud-Nissen F."/>
            <person name="Schobel S."/>
            <person name="Town C.D."/>
        </authorList>
    </citation>
    <scope>GENOME REANNOTATION</scope>
    <source>
        <strain>cv. Columbia</strain>
    </source>
</reference>
<reference key="4">
    <citation type="journal article" date="2003" name="Science">
        <title>Empirical analysis of transcriptional activity in the Arabidopsis genome.</title>
        <authorList>
            <person name="Yamada K."/>
            <person name="Lim J."/>
            <person name="Dale J.M."/>
            <person name="Chen H."/>
            <person name="Shinn P."/>
            <person name="Palm C.J."/>
            <person name="Southwick A.M."/>
            <person name="Wu H.C."/>
            <person name="Kim C.J."/>
            <person name="Nguyen M."/>
            <person name="Pham P.K."/>
            <person name="Cheuk R.F."/>
            <person name="Karlin-Newmann G."/>
            <person name="Liu S.X."/>
            <person name="Lam B."/>
            <person name="Sakano H."/>
            <person name="Wu T."/>
            <person name="Yu G."/>
            <person name="Miranda M."/>
            <person name="Quach H.L."/>
            <person name="Tripp M."/>
            <person name="Chang C.H."/>
            <person name="Lee J.M."/>
            <person name="Toriumi M.J."/>
            <person name="Chan M.M."/>
            <person name="Tang C.C."/>
            <person name="Onodera C.S."/>
            <person name="Deng J.M."/>
            <person name="Akiyama K."/>
            <person name="Ansari Y."/>
            <person name="Arakawa T."/>
            <person name="Banh J."/>
            <person name="Banno F."/>
            <person name="Bowser L."/>
            <person name="Brooks S.Y."/>
            <person name="Carninci P."/>
            <person name="Chao Q."/>
            <person name="Choy N."/>
            <person name="Enju A."/>
            <person name="Goldsmith A.D."/>
            <person name="Gurjal M."/>
            <person name="Hansen N.F."/>
            <person name="Hayashizaki Y."/>
            <person name="Johnson-Hopson C."/>
            <person name="Hsuan V.W."/>
            <person name="Iida K."/>
            <person name="Karnes M."/>
            <person name="Khan S."/>
            <person name="Koesema E."/>
            <person name="Ishida J."/>
            <person name="Jiang P.X."/>
            <person name="Jones T."/>
            <person name="Kawai J."/>
            <person name="Kamiya A."/>
            <person name="Meyers C."/>
            <person name="Nakajima M."/>
            <person name="Narusaka M."/>
            <person name="Seki M."/>
            <person name="Sakurai T."/>
            <person name="Satou M."/>
            <person name="Tamse R."/>
            <person name="Vaysberg M."/>
            <person name="Wallender E.K."/>
            <person name="Wong C."/>
            <person name="Yamamura Y."/>
            <person name="Yuan S."/>
            <person name="Shinozaki K."/>
            <person name="Davis R.W."/>
            <person name="Theologis A."/>
            <person name="Ecker J.R."/>
        </authorList>
    </citation>
    <scope>NUCLEOTIDE SEQUENCE [LARGE SCALE MRNA]</scope>
    <source>
        <strain>cv. Columbia</strain>
    </source>
</reference>
<reference key="5">
    <citation type="journal article" date="1993" name="Plant J.">
        <title>An inventory of 1152 expressed sequence tags obtained by partial sequencing of cDNAs from Arabidopsis thaliana.</title>
        <authorList>
            <person name="Hoefte H."/>
            <person name="Desprez T."/>
            <person name="Amselem J."/>
            <person name="Chiapello H."/>
            <person name="Rouze P."/>
            <person name="Caboche M."/>
            <person name="Moisan A."/>
            <person name="Jourjon M.-F."/>
            <person name="Charpenteau J.-L."/>
            <person name="Berthomieu P."/>
            <person name="Guerrier D."/>
            <person name="Giraudat J."/>
            <person name="Quigley F."/>
            <person name="Thomas F."/>
            <person name="Yu D.-Y."/>
            <person name="Mache R."/>
            <person name="Raynal M."/>
            <person name="Cooke R."/>
            <person name="Grellet F."/>
            <person name="Delseny M."/>
            <person name="Parmentier Y."/>
            <person name="de Marcillac G."/>
            <person name="Gigot C."/>
            <person name="Fleck J."/>
            <person name="Philipps G."/>
            <person name="Axelos M."/>
            <person name="Bardet C."/>
            <person name="Tremousaygue D."/>
            <person name="Lescure B."/>
        </authorList>
    </citation>
    <scope>NUCLEOTIDE SEQUENCE [LARGE SCALE MRNA] OF 240-360</scope>
    <source>
        <strain>cv. Columbia</strain>
        <tissue>Green siliques</tissue>
    </source>
</reference>
<reference key="6">
    <citation type="submission" date="2005-03" db="EMBL/GenBank/DDBJ databases">
        <title>Large-scale analysis of RIKEN Arabidopsis full-length (RAFL) cDNAs.</title>
        <authorList>
            <person name="Totoki Y."/>
            <person name="Seki M."/>
            <person name="Ishida J."/>
            <person name="Nakajima M."/>
            <person name="Enju A."/>
            <person name="Kamiya A."/>
            <person name="Narusaka M."/>
            <person name="Shin-i T."/>
            <person name="Nakagawa M."/>
            <person name="Sakamoto N."/>
            <person name="Oishi K."/>
            <person name="Kohara Y."/>
            <person name="Kobayashi M."/>
            <person name="Toyoda A."/>
            <person name="Sakaki Y."/>
            <person name="Sakurai T."/>
            <person name="Iida K."/>
            <person name="Akiyama K."/>
            <person name="Satou M."/>
            <person name="Toyoda T."/>
            <person name="Konagaya A."/>
            <person name="Carninci P."/>
            <person name="Kawai J."/>
            <person name="Hayashizaki Y."/>
            <person name="Shinozaki K."/>
        </authorList>
    </citation>
    <scope>NUCLEOTIDE SEQUENCE [LARGE SCALE MRNA] OF 269-455</scope>
    <source>
        <strain>cv. Columbia</strain>
    </source>
</reference>
<reference key="7">
    <citation type="journal article" date="2002" name="Plant Cell">
        <title>Redundant proteolytic mechanisms process seed storage proteins in the absence of seed-type members of the vacuolar processing enzyme family of cysteine proteases.</title>
        <authorList>
            <person name="Gruis D.F."/>
            <person name="Selinger D.A."/>
            <person name="Curran J.M."/>
            <person name="Jung R."/>
        </authorList>
    </citation>
    <scope>IDENTIFICATION BY MASS SPECTROMETRY</scope>
    <scope>TISSUE SPECIFICITY</scope>
</reference>
<reference key="8">
    <citation type="journal article" date="2007" name="Biochem. J.">
        <title>Phosphorylation of the 12 S globulin cruciferin in wild-type and abi1-1 mutant Arabidopsis thaliana (thale cress) seeds.</title>
        <authorList>
            <person name="Wan L."/>
            <person name="Ross A.R."/>
            <person name="Yang J."/>
            <person name="Hegedus D.D."/>
            <person name="Kermode A.R."/>
        </authorList>
    </citation>
    <scope>IDENTIFICATION BY MASS SPECTROMETRY</scope>
    <scope>PHOSPHORYLATION AT THR-109; TYR-299; SER-367; THR-395; THR-420 AND SER-436</scope>
    <scope>NOMENCLATURE</scope>
</reference>
<reference key="9">
    <citation type="journal article" date="2007" name="J. Biochem. Mol. Biol.">
        <title>Systematic studies of 12S seed storage protein accumulation and degradation patterns during Arabidopsis seed maturation and early seedling germination stages.</title>
        <authorList>
            <person name="Li Q."/>
            <person name="Wang B.-C."/>
            <person name="Xu Y."/>
            <person name="Zhu Y.-X."/>
        </authorList>
    </citation>
    <scope>PROTEOLYSIS</scope>
    <scope>DEVELOPMENTAL STAGE</scope>
    <scope>TISSUE SPECIFICITY</scope>
</reference>
<reference key="10">
    <citation type="journal article" date="2008" name="Plant Physiol.">
        <title>Protein tyrosine kinases and protein tyrosine phosphatases are involved in abscisic acid-dependent processes in Arabidopsis seeds and suspension cells.</title>
        <authorList>
            <person name="Ghelis T."/>
            <person name="Bolbach G."/>
            <person name="Clodic G."/>
            <person name="Habricot Y."/>
            <person name="Miginiac E."/>
            <person name="Sotta B."/>
            <person name="Jeannette E."/>
        </authorList>
    </citation>
    <scope>IDENTIFICATION BY MASS SPECTROMETRY</scope>
    <scope>PHOSPHORYLATION</scope>
</reference>
<dbReference type="EMBL" id="M37248">
    <property type="protein sequence ID" value="AAA32778.1"/>
    <property type="molecule type" value="Genomic_DNA"/>
</dbReference>
<dbReference type="EMBL" id="X14313">
    <property type="protein sequence ID" value="CAA32494.1"/>
    <property type="molecule type" value="Genomic_DNA"/>
</dbReference>
<dbReference type="EMBL" id="AC003027">
    <property type="protein sequence ID" value="AAD10680.1"/>
    <property type="molecule type" value="Genomic_DNA"/>
</dbReference>
<dbReference type="EMBL" id="CP002684">
    <property type="protein sequence ID" value="AEE27628.1"/>
    <property type="molecule type" value="Genomic_DNA"/>
</dbReference>
<dbReference type="EMBL" id="AY093005">
    <property type="protein sequence ID" value="AAM13004.1"/>
    <property type="molecule type" value="mRNA"/>
</dbReference>
<dbReference type="EMBL" id="BT009682">
    <property type="protein sequence ID" value="AAP81800.1"/>
    <property type="molecule type" value="mRNA"/>
</dbReference>
<dbReference type="EMBL" id="Z17654">
    <property type="protein sequence ID" value="CAA79024.1"/>
    <property type="molecule type" value="mRNA"/>
</dbReference>
<dbReference type="EMBL" id="AK222062">
    <property type="protein sequence ID" value="BAD94859.1"/>
    <property type="status" value="ALT_INIT"/>
    <property type="molecule type" value="mRNA"/>
</dbReference>
<dbReference type="PIR" id="E86169">
    <property type="entry name" value="E86169"/>
</dbReference>
<dbReference type="PIR" id="S08510">
    <property type="entry name" value="S08510"/>
</dbReference>
<dbReference type="RefSeq" id="NP_171884.1">
    <property type="nucleotide sequence ID" value="NM_100268.5"/>
</dbReference>
<dbReference type="SMR" id="P15456"/>
<dbReference type="FunCoup" id="P15456">
    <property type="interactions" value="195"/>
</dbReference>
<dbReference type="STRING" id="3702.P15456"/>
<dbReference type="iPTMnet" id="P15456"/>
<dbReference type="PaxDb" id="3702-AT1G03880.1"/>
<dbReference type="ProteomicsDB" id="222679"/>
<dbReference type="EnsemblPlants" id="AT1G03880.1">
    <property type="protein sequence ID" value="AT1G03880.1"/>
    <property type="gene ID" value="AT1G03880"/>
</dbReference>
<dbReference type="GeneID" id="839383"/>
<dbReference type="Gramene" id="AT1G03880.1">
    <property type="protein sequence ID" value="AT1G03880.1"/>
    <property type="gene ID" value="AT1G03880"/>
</dbReference>
<dbReference type="KEGG" id="ath:AT1G03880"/>
<dbReference type="Araport" id="AT1G03880"/>
<dbReference type="TAIR" id="AT1G03880">
    <property type="gene designation" value="CRU2"/>
</dbReference>
<dbReference type="eggNOG" id="ENOG502QU1J">
    <property type="taxonomic scope" value="Eukaryota"/>
</dbReference>
<dbReference type="HOGENOM" id="CLU_026341_2_0_1"/>
<dbReference type="InParanoid" id="P15456"/>
<dbReference type="OMA" id="GEQFEWI"/>
<dbReference type="OrthoDB" id="2016041at2759"/>
<dbReference type="PhylomeDB" id="P15456"/>
<dbReference type="PRO" id="PR:P15456"/>
<dbReference type="Proteomes" id="UP000006548">
    <property type="component" value="Chromosome 1"/>
</dbReference>
<dbReference type="ExpressionAtlas" id="P15456">
    <property type="expression patterns" value="baseline and differential"/>
</dbReference>
<dbReference type="GO" id="GO:0000326">
    <property type="term" value="C:protein storage vacuole"/>
    <property type="evidence" value="ECO:0007669"/>
    <property type="project" value="UniProtKB-SubCell"/>
</dbReference>
<dbReference type="GO" id="GO:0045735">
    <property type="term" value="F:nutrient reservoir activity"/>
    <property type="evidence" value="ECO:0000314"/>
    <property type="project" value="UniProtKB"/>
</dbReference>
<dbReference type="GO" id="GO:0071215">
    <property type="term" value="P:cellular response to abscisic acid stimulus"/>
    <property type="evidence" value="ECO:0000314"/>
    <property type="project" value="UniProtKB"/>
</dbReference>
<dbReference type="GO" id="GO:0009737">
    <property type="term" value="P:response to abscisic acid"/>
    <property type="evidence" value="ECO:0000270"/>
    <property type="project" value="TAIR"/>
</dbReference>
<dbReference type="GO" id="GO:0010431">
    <property type="term" value="P:seed maturation"/>
    <property type="evidence" value="ECO:0000314"/>
    <property type="project" value="UniProtKB"/>
</dbReference>
<dbReference type="CDD" id="cd02243">
    <property type="entry name" value="cupin_11S_legumin_C"/>
    <property type="match status" value="1"/>
</dbReference>
<dbReference type="CDD" id="cd02242">
    <property type="entry name" value="cupin_11S_legumin_N"/>
    <property type="match status" value="1"/>
</dbReference>
<dbReference type="FunFam" id="2.60.120.10:FF:000073">
    <property type="entry name" value="Glycinin G1"/>
    <property type="match status" value="1"/>
</dbReference>
<dbReference type="FunFam" id="2.60.120.10:FF:000124">
    <property type="entry name" value="Glycinin G5"/>
    <property type="match status" value="1"/>
</dbReference>
<dbReference type="Gene3D" id="2.60.120.10">
    <property type="entry name" value="Jelly Rolls"/>
    <property type="match status" value="2"/>
</dbReference>
<dbReference type="InterPro" id="IPR022379">
    <property type="entry name" value="11S_seedstore_CS"/>
</dbReference>
<dbReference type="InterPro" id="IPR006044">
    <property type="entry name" value="11S_seedstore_pln"/>
</dbReference>
<dbReference type="InterPro" id="IPR006045">
    <property type="entry name" value="Cupin_1"/>
</dbReference>
<dbReference type="InterPro" id="IPR014710">
    <property type="entry name" value="RmlC-like_jellyroll"/>
</dbReference>
<dbReference type="InterPro" id="IPR011051">
    <property type="entry name" value="RmlC_Cupin_sf"/>
</dbReference>
<dbReference type="InterPro" id="IPR050253">
    <property type="entry name" value="Seed_Storage-Functional"/>
</dbReference>
<dbReference type="PANTHER" id="PTHR31189:SF35">
    <property type="entry name" value="12S SEED STORAGE PROTEIN CRB"/>
    <property type="match status" value="1"/>
</dbReference>
<dbReference type="PANTHER" id="PTHR31189">
    <property type="entry name" value="OS03G0336100 PROTEIN-RELATED"/>
    <property type="match status" value="1"/>
</dbReference>
<dbReference type="Pfam" id="PF00190">
    <property type="entry name" value="Cupin_1"/>
    <property type="match status" value="2"/>
</dbReference>
<dbReference type="PRINTS" id="PR00439">
    <property type="entry name" value="11SGLOBULIN"/>
</dbReference>
<dbReference type="SMART" id="SM00835">
    <property type="entry name" value="Cupin_1"/>
    <property type="match status" value="2"/>
</dbReference>
<dbReference type="SUPFAM" id="SSF51182">
    <property type="entry name" value="RmlC-like cupins"/>
    <property type="match status" value="1"/>
</dbReference>
<dbReference type="PROSITE" id="PS00305">
    <property type="entry name" value="11S_SEED_STORAGE"/>
    <property type="match status" value="1"/>
</dbReference>
<evidence type="ECO:0000250" key="1"/>
<evidence type="ECO:0000250" key="2">
    <source>
        <dbReference type="UniProtKB" id="P15455"/>
    </source>
</evidence>
<evidence type="ECO:0000255" key="3"/>
<evidence type="ECO:0000269" key="4">
    <source>
    </source>
</evidence>
<evidence type="ECO:0000269" key="5">
    <source>
    </source>
</evidence>
<evidence type="ECO:0000269" key="6">
    <source>
    </source>
</evidence>
<evidence type="ECO:0000269" key="7">
    <source>
    </source>
</evidence>
<evidence type="ECO:0000269" key="8">
    <source ref="1"/>
</evidence>
<evidence type="ECO:0000305" key="9"/>
<protein>
    <recommendedName>
        <fullName>12S seed storage protein CRB</fullName>
    </recommendedName>
    <alternativeName>
        <fullName>Cruciferin 2</fullName>
        <shortName>AtCRU2</shortName>
    </alternativeName>
    <alternativeName>
        <fullName>Cruciferin B</fullName>
    </alternativeName>
    <alternativeName>
        <fullName>Legumin-type globulin storage protein CRU2</fullName>
    </alternativeName>
    <component>
        <recommendedName>
            <fullName>12S seed storage protein CRB alpha chain</fullName>
        </recommendedName>
        <alternativeName>
            <fullName>12S seed storage protein CRB acidic chain</fullName>
        </alternativeName>
    </component>
    <component>
        <recommendedName>
            <fullName>12S seed storage protein CRB beta chain</fullName>
        </recommendedName>
        <alternativeName>
            <fullName>12S seed storage protein CRB basic chain</fullName>
        </alternativeName>
    </component>
</protein>
<organism>
    <name type="scientific">Arabidopsis thaliana</name>
    <name type="common">Mouse-ear cress</name>
    <dbReference type="NCBI Taxonomy" id="3702"/>
    <lineage>
        <taxon>Eukaryota</taxon>
        <taxon>Viridiplantae</taxon>
        <taxon>Streptophyta</taxon>
        <taxon>Embryophyta</taxon>
        <taxon>Tracheophyta</taxon>
        <taxon>Spermatophyta</taxon>
        <taxon>Magnoliopsida</taxon>
        <taxon>eudicotyledons</taxon>
        <taxon>Gunneridae</taxon>
        <taxon>Pentapetalae</taxon>
        <taxon>rosids</taxon>
        <taxon>malvids</taxon>
        <taxon>Brassicales</taxon>
        <taxon>Brassicaceae</taxon>
        <taxon>Camelineae</taxon>
        <taxon>Arabidopsis</taxon>
    </lineage>
</organism>
<comment type="function">
    <text>Seed storage protein.</text>
</comment>
<comment type="subunit">
    <text>Hexamer; each subunit is composed of an acidic and a basic chain derived from a single precursor and linked by a disulfide bond.</text>
</comment>
<comment type="subcellular location">
    <subcellularLocation>
        <location evidence="9">Protein storage vacuole</location>
    </subcellularLocation>
</comment>
<comment type="tissue specificity">
    <text evidence="4 6">Accumulates in seeds 8 days after anthesis.</text>
</comment>
<comment type="developmental stage">
    <text evidence="6 8">Detected in siliques at nucleotide level from 6 days post anthesis (dpa) to 17 dpa. First observed in siliques at protein level 12 dpa and accumulates progressively as native isoforms or proteolytic fragments during the last week of seed maturation/desiccation. Present in dry seeds, but disappears during their germination (at protein level).</text>
</comment>
<comment type="PTM">
    <text evidence="1">Ubiquitinated.</text>
</comment>
<comment type="PTM">
    <text>Proteolytically processed during seed maturation at a conserved Asn-Gly peptide bond by an asparaginyl endopeptidase to produce two mature polypeptides referred to as alpha and beta subunits that are joined together by a disulfide bond.</text>
</comment>
<comment type="PTM">
    <text evidence="5 7">Phosphorylated in seeds on some Tyr residues in response to abscisic acid (ABA).</text>
</comment>
<comment type="similarity">
    <text evidence="9">Belongs to the 11S seed storage protein (globulins) family.</text>
</comment>
<comment type="sequence caution" evidence="9">
    <conflict type="erroneous initiation">
        <sequence resource="EMBL-CDS" id="BAD94859"/>
    </conflict>
    <text>Truncated N-terminus.</text>
</comment>
<gene>
    <name type="primary">CRB</name>
    <name type="synonym">CRU2</name>
    <name type="synonym">CRU3</name>
    <name type="ordered locus">At1g03880</name>
    <name type="ORF">F21M11.19</name>
</gene>
<feature type="signal peptide" evidence="1">
    <location>
        <begin position="1"/>
        <end position="24"/>
    </location>
</feature>
<feature type="chain" id="PRO_0000032001" description="12S seed storage protein CRB alpha chain" evidence="1">
    <location>
        <begin position="25"/>
        <end position="269"/>
    </location>
</feature>
<feature type="chain" id="PRO_0000032002" description="12S seed storage protein CRB beta chain" evidence="1">
    <location>
        <begin position="270"/>
        <end position="455"/>
    </location>
</feature>
<feature type="domain" description="Cupin type-1 1" evidence="3">
    <location>
        <begin position="35"/>
        <end position="229"/>
    </location>
</feature>
<feature type="domain" description="Cupin type-1 2" evidence="3">
    <location>
        <begin position="282"/>
        <end position="431"/>
    </location>
</feature>
<feature type="modified residue" description="Phosphothreonine" evidence="5">
    <location>
        <position position="109"/>
    </location>
</feature>
<feature type="modified residue" description="Phosphotyrosine" evidence="5">
    <location>
        <position position="299"/>
    </location>
</feature>
<feature type="modified residue" description="Phosphoserine" evidence="2">
    <location>
        <position position="301"/>
    </location>
</feature>
<feature type="modified residue" description="Phosphoserine" evidence="5">
    <location>
        <position position="367"/>
    </location>
</feature>
<feature type="modified residue" description="Phosphothreonine" evidence="5">
    <location>
        <position position="395"/>
    </location>
</feature>
<feature type="modified residue" description="Phosphothreonine" evidence="5">
    <location>
        <position position="420"/>
    </location>
</feature>
<feature type="modified residue" description="Phosphoserine" evidence="5">
    <location>
        <position position="436"/>
    </location>
</feature>
<feature type="disulfide bond" evidence="1">
    <location>
        <begin position="30"/>
        <end position="63"/>
    </location>
</feature>
<feature type="disulfide bond" description="Interchain (between alpha and beta chains)" evidence="3">
    <location>
        <begin position="106"/>
        <end position="276"/>
    </location>
</feature>
<feature type="sequence conflict" description="In Ref. 1; AAA32778/CAA32494." evidence="9" ref="1">
    <original>A</original>
    <variation>R</variation>
    <location>
        <position position="383"/>
    </location>
</feature>
<sequence>MGRVSSIISFSLTLLILFNGYTAQQWPNECQLDQLNALEPSQIIKSEGGRIEVWDHHAPQLRCSGFAFERFVIEPQGLFLPTFLNAGKLTFVVHGRGLMGRVIPGCAETFMESPVFGEGQGQGQSQGFRDMHQKVEHLRCGDTIATPSGVAQWFYNNGNEPLILVAAADLASNQNQLDRNLRPFLIAGNNPQGQEWLQGRKQQKQNNIFNGFAPEILAQAFKINVETAQQLQNQQDNRGNIVKVNGPFGVIRPPLRRGEGGQQPHEIANGLEETLCTMRCTENLDDPSDADVYKPSLGYISTLNSYNLPILRLLRLSALRGSIRKNAMVLPQWNVNANAALYVTNGKAHIQMVNDNGERVFDQEISSGQLLVVPQGFSVMKHAIGEQFEWIEFKTNENAQVNTLAGRTSVMRGLPLEVITNGYQISPEEAKRVKFSTIETTLTHSSPMSYGRPRA</sequence>
<accession>P15456</accession>
<accession>Q56WH8</accession>
<accession>Q9SAW0</accession>
<name>CRU2_ARATH</name>
<proteinExistence type="evidence at protein level"/>
<keyword id="KW-1015">Disulfide bond</keyword>
<keyword id="KW-0597">Phosphoprotein</keyword>
<keyword id="KW-1185">Reference proteome</keyword>
<keyword id="KW-0708">Seed storage protein</keyword>
<keyword id="KW-0732">Signal</keyword>
<keyword id="KW-0758">Storage protein</keyword>
<keyword id="KW-0832">Ubl conjugation</keyword>
<keyword id="KW-0926">Vacuole</keyword>